<organism>
    <name type="scientific">Escherichia coli O81 (strain ED1a)</name>
    <dbReference type="NCBI Taxonomy" id="585397"/>
    <lineage>
        <taxon>Bacteria</taxon>
        <taxon>Pseudomonadati</taxon>
        <taxon>Pseudomonadota</taxon>
        <taxon>Gammaproteobacteria</taxon>
        <taxon>Enterobacterales</taxon>
        <taxon>Enterobacteriaceae</taxon>
        <taxon>Escherichia</taxon>
    </lineage>
</organism>
<evidence type="ECO:0000255" key="1">
    <source>
        <dbReference type="HAMAP-Rule" id="MF_01092"/>
    </source>
</evidence>
<gene>
    <name evidence="1" type="primary">zapD</name>
    <name type="ordered locus">ECED1_0101</name>
</gene>
<sequence length="247" mass="28278">MQTQVLFEHPLNEKMRTWLRIEFLIQQLTVNLPIVDHAGALHFFRNVSELLDVFERGEVRTELLKELDRQQRKLQTWIGVPGVDQSRIEALIQQLKAAGSVLISAPRIGQFLREDRLIALVRQRLSIPGGCCSFDLPTLHIWLHLPQAQRDSQVETWIASLNPLTQALTMVLDLIRQSAPFRKQTSLNGFYQDNGGDADLLRLNLSLDSQLYPQISGHKSRFAIRFMPLDSENGQVPERLDFELACC</sequence>
<reference key="1">
    <citation type="journal article" date="2009" name="PLoS Genet.">
        <title>Organised genome dynamics in the Escherichia coli species results in highly diverse adaptive paths.</title>
        <authorList>
            <person name="Touchon M."/>
            <person name="Hoede C."/>
            <person name="Tenaillon O."/>
            <person name="Barbe V."/>
            <person name="Baeriswyl S."/>
            <person name="Bidet P."/>
            <person name="Bingen E."/>
            <person name="Bonacorsi S."/>
            <person name="Bouchier C."/>
            <person name="Bouvet O."/>
            <person name="Calteau A."/>
            <person name="Chiapello H."/>
            <person name="Clermont O."/>
            <person name="Cruveiller S."/>
            <person name="Danchin A."/>
            <person name="Diard M."/>
            <person name="Dossat C."/>
            <person name="Karoui M.E."/>
            <person name="Frapy E."/>
            <person name="Garry L."/>
            <person name="Ghigo J.M."/>
            <person name="Gilles A.M."/>
            <person name="Johnson J."/>
            <person name="Le Bouguenec C."/>
            <person name="Lescat M."/>
            <person name="Mangenot S."/>
            <person name="Martinez-Jehanne V."/>
            <person name="Matic I."/>
            <person name="Nassif X."/>
            <person name="Oztas S."/>
            <person name="Petit M.A."/>
            <person name="Pichon C."/>
            <person name="Rouy Z."/>
            <person name="Ruf C.S."/>
            <person name="Schneider D."/>
            <person name="Tourret J."/>
            <person name="Vacherie B."/>
            <person name="Vallenet D."/>
            <person name="Medigue C."/>
            <person name="Rocha E.P.C."/>
            <person name="Denamur E."/>
        </authorList>
    </citation>
    <scope>NUCLEOTIDE SEQUENCE [LARGE SCALE GENOMIC DNA]</scope>
    <source>
        <strain>ED1a</strain>
    </source>
</reference>
<name>ZAPD_ECO81</name>
<proteinExistence type="inferred from homology"/>
<comment type="function">
    <text evidence="1">Cell division factor that enhances FtsZ-ring assembly. Directly interacts with FtsZ and promotes bundling of FtsZ protofilaments, with a reduction in FtsZ GTPase activity.</text>
</comment>
<comment type="subunit">
    <text evidence="1">Interacts with FtsZ.</text>
</comment>
<comment type="subcellular location">
    <subcellularLocation>
        <location evidence="1">Cytoplasm</location>
    </subcellularLocation>
    <text evidence="1">Localizes to mid-cell in an FtsZ-dependent manner.</text>
</comment>
<comment type="similarity">
    <text evidence="1">Belongs to the ZapD family.</text>
</comment>
<feature type="chain" id="PRO_1000149890" description="Cell division protein ZapD">
    <location>
        <begin position="1"/>
        <end position="247"/>
    </location>
</feature>
<accession>B7MNV9</accession>
<protein>
    <recommendedName>
        <fullName evidence="1">Cell division protein ZapD</fullName>
    </recommendedName>
    <alternativeName>
        <fullName evidence="1">Z ring-associated protein D</fullName>
    </alternativeName>
</protein>
<dbReference type="EMBL" id="CU928162">
    <property type="protein sequence ID" value="CAR06324.1"/>
    <property type="molecule type" value="Genomic_DNA"/>
</dbReference>
<dbReference type="RefSeq" id="WP_001194731.1">
    <property type="nucleotide sequence ID" value="NC_011745.1"/>
</dbReference>
<dbReference type="SMR" id="B7MNV9"/>
<dbReference type="KEGG" id="ecq:ECED1_0101"/>
<dbReference type="HOGENOM" id="CLU_076303_0_0_6"/>
<dbReference type="Proteomes" id="UP000000748">
    <property type="component" value="Chromosome"/>
</dbReference>
<dbReference type="GO" id="GO:0032153">
    <property type="term" value="C:cell division site"/>
    <property type="evidence" value="ECO:0007669"/>
    <property type="project" value="TreeGrafter"/>
</dbReference>
<dbReference type="GO" id="GO:0005737">
    <property type="term" value="C:cytoplasm"/>
    <property type="evidence" value="ECO:0007669"/>
    <property type="project" value="UniProtKB-SubCell"/>
</dbReference>
<dbReference type="GO" id="GO:0000917">
    <property type="term" value="P:division septum assembly"/>
    <property type="evidence" value="ECO:0007669"/>
    <property type="project" value="UniProtKB-KW"/>
</dbReference>
<dbReference type="GO" id="GO:0043093">
    <property type="term" value="P:FtsZ-dependent cytokinesis"/>
    <property type="evidence" value="ECO:0007669"/>
    <property type="project" value="UniProtKB-UniRule"/>
</dbReference>
<dbReference type="FunFam" id="1.10.3900.10:FF:000001">
    <property type="entry name" value="Cell division protein ZapD"/>
    <property type="match status" value="1"/>
</dbReference>
<dbReference type="FunFam" id="2.60.440.10:FF:000001">
    <property type="entry name" value="Cell division protein ZapD"/>
    <property type="match status" value="1"/>
</dbReference>
<dbReference type="Gene3D" id="1.10.3900.10">
    <property type="entry name" value="YacF-like"/>
    <property type="match status" value="1"/>
</dbReference>
<dbReference type="Gene3D" id="2.60.440.10">
    <property type="entry name" value="YacF-like domains"/>
    <property type="match status" value="1"/>
</dbReference>
<dbReference type="HAMAP" id="MF_01092">
    <property type="entry name" value="ZapD"/>
    <property type="match status" value="1"/>
</dbReference>
<dbReference type="InterPro" id="IPR009777">
    <property type="entry name" value="ZapD"/>
</dbReference>
<dbReference type="InterPro" id="IPR027462">
    <property type="entry name" value="ZapD_C"/>
</dbReference>
<dbReference type="InterPro" id="IPR036268">
    <property type="entry name" value="ZapD_sf"/>
</dbReference>
<dbReference type="NCBIfam" id="NF003653">
    <property type="entry name" value="PRK05287.1-1"/>
    <property type="match status" value="1"/>
</dbReference>
<dbReference type="NCBIfam" id="NF003655">
    <property type="entry name" value="PRK05287.1-3"/>
    <property type="match status" value="1"/>
</dbReference>
<dbReference type="PANTHER" id="PTHR39455">
    <property type="entry name" value="CELL DIVISION PROTEIN ZAPD"/>
    <property type="match status" value="1"/>
</dbReference>
<dbReference type="PANTHER" id="PTHR39455:SF1">
    <property type="entry name" value="CELL DIVISION PROTEIN ZAPD"/>
    <property type="match status" value="1"/>
</dbReference>
<dbReference type="Pfam" id="PF07072">
    <property type="entry name" value="ZapD"/>
    <property type="match status" value="1"/>
</dbReference>
<dbReference type="SUPFAM" id="SSF160950">
    <property type="entry name" value="YacF-like"/>
    <property type="match status" value="1"/>
</dbReference>
<keyword id="KW-0131">Cell cycle</keyword>
<keyword id="KW-0132">Cell division</keyword>
<keyword id="KW-0963">Cytoplasm</keyword>
<keyword id="KW-0717">Septation</keyword>